<sequence>MLEHLRATDPIIADLIEREAQRQRQGLELIASENYTSLAVMEAQGSVLTNKYAEGLPGRRYYGGCEFVDAIEQLAIERACQLFGTSHANVQPHSGAQANIAVFTALLQPGDTILGMRLDHGGHLTHGSPVNFSGKWYNVHFYGVDAQTGQIDYDDLASKARAIRPKLITSGASAYPRIIDFARMRQIADEVGALLMADIAHIAGLVAAGEHPSPVGHAHVITTTTHKTLRGPRGGLILMGDDFAKQLNSSVFPGTQGGPLMHVIAGKAVAFGEALRPEFRQYAAQIRRNARALAEGLMAQGLTLVSGGTDNHLMLVDLRSTGLTGAQAQRALDKAAITVNKNAIPDDPQPPMKTSGIRIGTPAVTTRGMREPEMAQIAAWIGEVLMYPDDEARLNRIAGEVADLCRHFPVPADMVQVRG</sequence>
<organism>
    <name type="scientific">Chloroflexus aurantiacus (strain ATCC 29364 / DSM 637 / Y-400-fl)</name>
    <dbReference type="NCBI Taxonomy" id="480224"/>
    <lineage>
        <taxon>Bacteria</taxon>
        <taxon>Bacillati</taxon>
        <taxon>Chloroflexota</taxon>
        <taxon>Chloroflexia</taxon>
        <taxon>Chloroflexales</taxon>
        <taxon>Chloroflexineae</taxon>
        <taxon>Chloroflexaceae</taxon>
        <taxon>Chloroflexus</taxon>
    </lineage>
</organism>
<comment type="function">
    <text evidence="1">Catalyzes the reversible interconversion of serine and glycine with tetrahydrofolate (THF) serving as the one-carbon carrier. This reaction serves as the major source of one-carbon groups required for the biosynthesis of purines, thymidylate, methionine, and other important biomolecules. Also exhibits THF-independent aldolase activity toward beta-hydroxyamino acids, producing glycine and aldehydes, via a retro-aldol mechanism.</text>
</comment>
<comment type="catalytic activity">
    <reaction evidence="1">
        <text>(6R)-5,10-methylene-5,6,7,8-tetrahydrofolate + glycine + H2O = (6S)-5,6,7,8-tetrahydrofolate + L-serine</text>
        <dbReference type="Rhea" id="RHEA:15481"/>
        <dbReference type="ChEBI" id="CHEBI:15377"/>
        <dbReference type="ChEBI" id="CHEBI:15636"/>
        <dbReference type="ChEBI" id="CHEBI:33384"/>
        <dbReference type="ChEBI" id="CHEBI:57305"/>
        <dbReference type="ChEBI" id="CHEBI:57453"/>
        <dbReference type="EC" id="2.1.2.1"/>
    </reaction>
</comment>
<comment type="cofactor">
    <cofactor evidence="1">
        <name>pyridoxal 5'-phosphate</name>
        <dbReference type="ChEBI" id="CHEBI:597326"/>
    </cofactor>
</comment>
<comment type="pathway">
    <text evidence="1">One-carbon metabolism; tetrahydrofolate interconversion.</text>
</comment>
<comment type="pathway">
    <text evidence="1">Amino-acid biosynthesis; glycine biosynthesis; glycine from L-serine: step 1/1.</text>
</comment>
<comment type="subunit">
    <text evidence="1">Homodimer.</text>
</comment>
<comment type="subcellular location">
    <subcellularLocation>
        <location evidence="1">Cytoplasm</location>
    </subcellularLocation>
</comment>
<comment type="similarity">
    <text evidence="1">Belongs to the SHMT family.</text>
</comment>
<dbReference type="EC" id="2.1.2.1" evidence="1"/>
<dbReference type="EMBL" id="CP001364">
    <property type="protein sequence ID" value="ACM54133.1"/>
    <property type="molecule type" value="Genomic_DNA"/>
</dbReference>
<dbReference type="SMR" id="B9LKK8"/>
<dbReference type="KEGG" id="chl:Chy400_2744"/>
<dbReference type="HOGENOM" id="CLU_022477_2_1_0"/>
<dbReference type="OrthoDB" id="9803846at2"/>
<dbReference type="UniPathway" id="UPA00193"/>
<dbReference type="UniPathway" id="UPA00288">
    <property type="reaction ID" value="UER01023"/>
</dbReference>
<dbReference type="GO" id="GO:0005829">
    <property type="term" value="C:cytosol"/>
    <property type="evidence" value="ECO:0007669"/>
    <property type="project" value="TreeGrafter"/>
</dbReference>
<dbReference type="GO" id="GO:0004372">
    <property type="term" value="F:glycine hydroxymethyltransferase activity"/>
    <property type="evidence" value="ECO:0007669"/>
    <property type="project" value="UniProtKB-UniRule"/>
</dbReference>
<dbReference type="GO" id="GO:0030170">
    <property type="term" value="F:pyridoxal phosphate binding"/>
    <property type="evidence" value="ECO:0007669"/>
    <property type="project" value="UniProtKB-UniRule"/>
</dbReference>
<dbReference type="GO" id="GO:0019264">
    <property type="term" value="P:glycine biosynthetic process from serine"/>
    <property type="evidence" value="ECO:0007669"/>
    <property type="project" value="UniProtKB-UniRule"/>
</dbReference>
<dbReference type="GO" id="GO:0035999">
    <property type="term" value="P:tetrahydrofolate interconversion"/>
    <property type="evidence" value="ECO:0007669"/>
    <property type="project" value="UniProtKB-UniRule"/>
</dbReference>
<dbReference type="CDD" id="cd00378">
    <property type="entry name" value="SHMT"/>
    <property type="match status" value="1"/>
</dbReference>
<dbReference type="FunFam" id="3.40.640.10:FF:000001">
    <property type="entry name" value="Serine hydroxymethyltransferase"/>
    <property type="match status" value="1"/>
</dbReference>
<dbReference type="FunFam" id="3.90.1150.10:FF:000003">
    <property type="entry name" value="Serine hydroxymethyltransferase"/>
    <property type="match status" value="1"/>
</dbReference>
<dbReference type="Gene3D" id="3.90.1150.10">
    <property type="entry name" value="Aspartate Aminotransferase, domain 1"/>
    <property type="match status" value="1"/>
</dbReference>
<dbReference type="Gene3D" id="3.40.640.10">
    <property type="entry name" value="Type I PLP-dependent aspartate aminotransferase-like (Major domain)"/>
    <property type="match status" value="1"/>
</dbReference>
<dbReference type="HAMAP" id="MF_00051">
    <property type="entry name" value="SHMT"/>
    <property type="match status" value="1"/>
</dbReference>
<dbReference type="InterPro" id="IPR015424">
    <property type="entry name" value="PyrdxlP-dep_Trfase"/>
</dbReference>
<dbReference type="InterPro" id="IPR015421">
    <property type="entry name" value="PyrdxlP-dep_Trfase_major"/>
</dbReference>
<dbReference type="InterPro" id="IPR015422">
    <property type="entry name" value="PyrdxlP-dep_Trfase_small"/>
</dbReference>
<dbReference type="InterPro" id="IPR001085">
    <property type="entry name" value="Ser_HO-MeTrfase"/>
</dbReference>
<dbReference type="InterPro" id="IPR049943">
    <property type="entry name" value="Ser_HO-MeTrfase-like"/>
</dbReference>
<dbReference type="InterPro" id="IPR019798">
    <property type="entry name" value="Ser_HO-MeTrfase_PLP_BS"/>
</dbReference>
<dbReference type="InterPro" id="IPR039429">
    <property type="entry name" value="SHMT-like_dom"/>
</dbReference>
<dbReference type="NCBIfam" id="NF000586">
    <property type="entry name" value="PRK00011.1"/>
    <property type="match status" value="1"/>
</dbReference>
<dbReference type="PANTHER" id="PTHR11680">
    <property type="entry name" value="SERINE HYDROXYMETHYLTRANSFERASE"/>
    <property type="match status" value="1"/>
</dbReference>
<dbReference type="PANTHER" id="PTHR11680:SF35">
    <property type="entry name" value="SERINE HYDROXYMETHYLTRANSFERASE 1"/>
    <property type="match status" value="1"/>
</dbReference>
<dbReference type="Pfam" id="PF00464">
    <property type="entry name" value="SHMT"/>
    <property type="match status" value="1"/>
</dbReference>
<dbReference type="PIRSF" id="PIRSF000412">
    <property type="entry name" value="SHMT"/>
    <property type="match status" value="1"/>
</dbReference>
<dbReference type="SUPFAM" id="SSF53383">
    <property type="entry name" value="PLP-dependent transferases"/>
    <property type="match status" value="1"/>
</dbReference>
<dbReference type="PROSITE" id="PS00096">
    <property type="entry name" value="SHMT"/>
    <property type="match status" value="1"/>
</dbReference>
<feature type="chain" id="PRO_1000195437" description="Serine hydroxymethyltransferase">
    <location>
        <begin position="1"/>
        <end position="419"/>
    </location>
</feature>
<feature type="binding site" evidence="1">
    <location>
        <position position="118"/>
    </location>
    <ligand>
        <name>(6S)-5,6,7,8-tetrahydrofolate</name>
        <dbReference type="ChEBI" id="CHEBI:57453"/>
    </ligand>
</feature>
<feature type="binding site" evidence="1">
    <location>
        <begin position="122"/>
        <end position="124"/>
    </location>
    <ligand>
        <name>(6S)-5,6,7,8-tetrahydrofolate</name>
        <dbReference type="ChEBI" id="CHEBI:57453"/>
    </ligand>
</feature>
<feature type="site" description="Plays an important role in substrate specificity" evidence="1">
    <location>
        <position position="226"/>
    </location>
</feature>
<feature type="modified residue" description="N6-(pyridoxal phosphate)lysine" evidence="1">
    <location>
        <position position="227"/>
    </location>
</feature>
<reference key="1">
    <citation type="submission" date="2009-01" db="EMBL/GenBank/DDBJ databases">
        <title>Complete sequence of Chloroflexus sp. Y-400-fl.</title>
        <authorList>
            <consortium name="US DOE Joint Genome Institute"/>
            <person name="Lucas S."/>
            <person name="Copeland A."/>
            <person name="Lapidus A."/>
            <person name="Glavina del Rio T."/>
            <person name="Dalin E."/>
            <person name="Tice H."/>
            <person name="Bruce D."/>
            <person name="Goodwin L."/>
            <person name="Pitluck S."/>
            <person name="Sims D."/>
            <person name="Kiss H."/>
            <person name="Brettin T."/>
            <person name="Detter J.C."/>
            <person name="Han C."/>
            <person name="Larimer F."/>
            <person name="Land M."/>
            <person name="Hauser L."/>
            <person name="Kyrpides N."/>
            <person name="Ovchinnikova G."/>
            <person name="Bryant D.A."/>
            <person name="Richardson P."/>
        </authorList>
    </citation>
    <scope>NUCLEOTIDE SEQUENCE [LARGE SCALE GENOMIC DNA]</scope>
    <source>
        <strain>ATCC 29364 / DSM 637 / Y-400-fl</strain>
    </source>
</reference>
<gene>
    <name evidence="1" type="primary">glyA</name>
    <name type="ordered locus">Chy400_2744</name>
</gene>
<evidence type="ECO:0000255" key="1">
    <source>
        <dbReference type="HAMAP-Rule" id="MF_00051"/>
    </source>
</evidence>
<name>GLYA_CHLSY</name>
<protein>
    <recommendedName>
        <fullName evidence="1">Serine hydroxymethyltransferase</fullName>
        <shortName evidence="1">SHMT</shortName>
        <shortName evidence="1">Serine methylase</shortName>
        <ecNumber evidence="1">2.1.2.1</ecNumber>
    </recommendedName>
</protein>
<accession>B9LKK8</accession>
<keyword id="KW-0028">Amino-acid biosynthesis</keyword>
<keyword id="KW-0963">Cytoplasm</keyword>
<keyword id="KW-0554">One-carbon metabolism</keyword>
<keyword id="KW-0663">Pyridoxal phosphate</keyword>
<keyword id="KW-0808">Transferase</keyword>
<proteinExistence type="inferred from homology"/>